<keyword id="KW-1015">Disulfide bond</keyword>
<keyword id="KW-0872">Ion channel impairing toxin</keyword>
<keyword id="KW-0528">Neurotoxin</keyword>
<keyword id="KW-0632">Potassium channel impairing toxin</keyword>
<keyword id="KW-0964">Secreted</keyword>
<keyword id="KW-0732">Signal</keyword>
<keyword id="KW-0800">Toxin</keyword>
<keyword id="KW-1220">Voltage-gated potassium channel impairing toxin</keyword>
<proteinExistence type="inferred from homology"/>
<protein>
    <recommendedName>
        <fullName evidence="4">Potassium channel toxin ImKTx88</fullName>
    </recommendedName>
    <alternativeName>
        <fullName evidence="5">Potassium channel toxin alpha-KTx</fullName>
    </alternativeName>
</protein>
<evidence type="ECO:0000250" key="1"/>
<evidence type="ECO:0000255" key="2"/>
<evidence type="ECO:0000269" key="3">
    <source>
    </source>
</evidence>
<evidence type="ECO:0000303" key="4">
    <source>
    </source>
</evidence>
<evidence type="ECO:0000305" key="5"/>
<evidence type="ECO:0000305" key="6">
    <source>
    </source>
</evidence>
<accession>P0CJ24</accession>
<feature type="signal peptide" evidence="2">
    <location>
        <begin position="1"/>
        <end position="22"/>
    </location>
</feature>
<feature type="chain" id="PRO_0000405976" description="Potassium channel toxin ImKTx88">
    <location>
        <begin position="23"/>
        <end position="60"/>
    </location>
</feature>
<feature type="site" description="Basic residue of the functional dyad" evidence="1">
    <location>
        <position position="50"/>
    </location>
</feature>
<feature type="site" description="Aromatic residue of the functional dyad" evidence="1">
    <location>
        <position position="59"/>
    </location>
</feature>
<feature type="disulfide bond" evidence="1">
    <location>
        <begin position="30"/>
        <end position="51"/>
    </location>
</feature>
<feature type="disulfide bond" evidence="1">
    <location>
        <begin position="36"/>
        <end position="56"/>
    </location>
</feature>
<feature type="disulfide bond" evidence="1">
    <location>
        <begin position="40"/>
        <end position="58"/>
    </location>
</feature>
<dbReference type="SMR" id="P0CJ24"/>
<dbReference type="GO" id="GO:0005576">
    <property type="term" value="C:extracellular region"/>
    <property type="evidence" value="ECO:0007669"/>
    <property type="project" value="UniProtKB-SubCell"/>
</dbReference>
<dbReference type="GO" id="GO:0008200">
    <property type="term" value="F:ion channel inhibitor activity"/>
    <property type="evidence" value="ECO:0007669"/>
    <property type="project" value="InterPro"/>
</dbReference>
<dbReference type="GO" id="GO:0015459">
    <property type="term" value="F:potassium channel regulator activity"/>
    <property type="evidence" value="ECO:0007669"/>
    <property type="project" value="UniProtKB-KW"/>
</dbReference>
<dbReference type="GO" id="GO:0090729">
    <property type="term" value="F:toxin activity"/>
    <property type="evidence" value="ECO:0007669"/>
    <property type="project" value="UniProtKB-KW"/>
</dbReference>
<dbReference type="Gene3D" id="3.30.30.10">
    <property type="entry name" value="Knottin, scorpion toxin-like"/>
    <property type="match status" value="1"/>
</dbReference>
<dbReference type="InterPro" id="IPR036574">
    <property type="entry name" value="Scorpion_toxin-like_sf"/>
</dbReference>
<dbReference type="InterPro" id="IPR001947">
    <property type="entry name" value="Scorpion_toxinS_K_inh"/>
</dbReference>
<dbReference type="Pfam" id="PF00451">
    <property type="entry name" value="Toxin_2"/>
    <property type="match status" value="1"/>
</dbReference>
<dbReference type="SUPFAM" id="SSF57095">
    <property type="entry name" value="Scorpion toxin-like"/>
    <property type="match status" value="1"/>
</dbReference>
<dbReference type="PROSITE" id="PS01138">
    <property type="entry name" value="SCORP_SHORT_TOXIN"/>
    <property type="match status" value="1"/>
</dbReference>
<organism>
    <name type="scientific">Isometrus maculatus</name>
    <name type="common">Lesser brown scorpion</name>
    <name type="synonym">Scorpio maculatus</name>
    <dbReference type="NCBI Taxonomy" id="497827"/>
    <lineage>
        <taxon>Eukaryota</taxon>
        <taxon>Metazoa</taxon>
        <taxon>Ecdysozoa</taxon>
        <taxon>Arthropoda</taxon>
        <taxon>Chelicerata</taxon>
        <taxon>Arachnida</taxon>
        <taxon>Scorpiones</taxon>
        <taxon>Buthida</taxon>
        <taxon>Buthoidea</taxon>
        <taxon>Buthidae</taxon>
        <taxon>Isometrus</taxon>
    </lineage>
</organism>
<name>KAX_ISOMC</name>
<comment type="function">
    <text evidence="3">Recombinant toxin selectively inhibits Kv1.3/KCNA3 potassium channels with an IC(50) of 91 pM.</text>
</comment>
<comment type="subcellular location">
    <subcellularLocation>
        <location evidence="6">Secreted</location>
    </subcellularLocation>
</comment>
<comment type="tissue specificity">
    <text evidence="6">Expressed by the venom gland.</text>
</comment>
<comment type="similarity">
    <text evidence="5">Belongs to the short scorpion toxin superfamily. Potassium channel inhibitor family.</text>
</comment>
<sequence length="60" mass="6763">MSNFSVFLIALLFCSVFILSEAQIYTSKECNGSSECYSHCEGITGKRSGKCINKKCYCYR</sequence>
<reference key="1">
    <citation type="journal article" date="2011" name="Toxicon">
        <title>ImKTx88, a novel selective Kv1.3 channel blocker derived from the scorpion Isometrus maculates.</title>
        <authorList>
            <person name="Han S."/>
            <person name="Hu Y."/>
            <person name="Zhang R."/>
            <person name="Yi H."/>
            <person name="Wei J."/>
            <person name="Wu Y."/>
            <person name="Cao Z."/>
            <person name="Li W."/>
            <person name="He X."/>
        </authorList>
    </citation>
    <scope>NUCLEOTIDE SEQUENCE [MRNA]</scope>
    <scope>FUNCTION</scope>
    <source>
        <tissue>Venom gland</tissue>
    </source>
</reference>